<name>VP2_BTV17</name>
<feature type="chain" id="PRO_0000222687" description="Outer capsid protein VP2">
    <location>
        <begin position="1"/>
        <end position="955"/>
    </location>
</feature>
<dbReference type="EMBL" id="M17438">
    <property type="protein sequence ID" value="AAA42830.1"/>
    <property type="molecule type" value="Genomic_RNA"/>
</dbReference>
<dbReference type="SMR" id="P05309"/>
<dbReference type="GO" id="GO:0039625">
    <property type="term" value="C:viral inner capsid"/>
    <property type="evidence" value="ECO:0007669"/>
    <property type="project" value="UniProtKB-KW"/>
</dbReference>
<dbReference type="GO" id="GO:0005198">
    <property type="term" value="F:structural molecule activity"/>
    <property type="evidence" value="ECO:0007669"/>
    <property type="project" value="InterPro"/>
</dbReference>
<dbReference type="GO" id="GO:0075512">
    <property type="term" value="P:clathrin-dependent endocytosis of virus by host cell"/>
    <property type="evidence" value="ECO:0007669"/>
    <property type="project" value="UniProtKB-KW"/>
</dbReference>
<dbReference type="GO" id="GO:0019062">
    <property type="term" value="P:virion attachment to host cell"/>
    <property type="evidence" value="ECO:0007669"/>
    <property type="project" value="UniProtKB-KW"/>
</dbReference>
<dbReference type="InterPro" id="IPR001742">
    <property type="entry name" value="Capsid_VP2_Orbivir"/>
</dbReference>
<dbReference type="Pfam" id="PF00898">
    <property type="entry name" value="Orbi_VP2"/>
    <property type="match status" value="1"/>
</dbReference>
<keyword id="KW-0167">Capsid protein</keyword>
<keyword id="KW-1165">Clathrin-mediated endocytosis of virus by host</keyword>
<keyword id="KW-0945">Host-virus interaction</keyword>
<keyword id="KW-1153">Inner capsid protein</keyword>
<keyword id="KW-1161">Viral attachment to host cell</keyword>
<keyword id="KW-1162">Viral penetration into host cytoplasm</keyword>
<keyword id="KW-0946">Virion</keyword>
<keyword id="KW-1164">Virus endocytosis by host</keyword>
<keyword id="KW-1160">Virus entry into host cell</keyword>
<organismHost>
    <name type="scientific">Antilocapra americana</name>
    <name type="common">Pronghorn</name>
    <dbReference type="NCBI Taxonomy" id="9891"/>
</organismHost>
<organismHost>
    <name type="scientific">Bos taurus</name>
    <name type="common">Bovine</name>
    <dbReference type="NCBI Taxonomy" id="9913"/>
</organismHost>
<organismHost>
    <name type="scientific">Capra hircus</name>
    <name type="common">Goat</name>
    <dbReference type="NCBI Taxonomy" id="9925"/>
</organismHost>
<organismHost>
    <name type="scientific">Culicoides variipennis</name>
    <name type="common">Biting midge</name>
    <dbReference type="NCBI Taxonomy" id="46212"/>
</organismHost>
<organismHost>
    <name type="scientific">Ovis aries</name>
    <name type="common">Sheep</name>
    <dbReference type="NCBI Taxonomy" id="9940"/>
</organismHost>
<accession>P05309</accession>
<proteinExistence type="inferred from homology"/>
<gene>
    <name type="primary">Segment-2</name>
</gene>
<sequence>MEEFVIPVYSEDEIPYALLSRYPLAIQTNVKIEDVEGKHNVVKIPESDMIDIPKLTIVEAMNYKPARNDGIVVPRLLDITLRAYDDRKSTKSARGIEFMTNARWMKWAIDDRMDIQPLKVTLDHYCSVNHQLFNCVVKANAANADTIYYDYFPLEDYKKRCNHTNLDLLRSLTNMELFHALQGAAYSIKSSYELVAYSERGSLEETYVVGQPKWIHLTRGTRIGNSGLSYERFISSMVQVSVNGKIPDEIANEIAQLNRIRAEWITATYDRGRIRALELCSILSTIGRKMLNTHEEPKDEMDLSTRFQFKLDEKFNRADSEHVNIFGVRGPATDEGRFYALIAIAATDTQKGRVWRTNPYPCLRGALVAAECELGDVYSTLRRVYTWSLRPEYGQHERQLENNKYVFNRINLFDSNLAVGDQIIHWRYEVKASAETTYDSGYMCRHEAEEDELLCKINEDKYKEMLDRMIQGGWDQERFKLHNILTDPNLLTIDFEKDAYLNSRSELVLPDYFDKWISSPMFNARLRITKGEIGTSKKDDPWNNRAVRGYIKPLAESLDFVLGPYYDLRLLFFDETLSLKQEQSAVFQYLSQLDDFPALTQLRGDAVCPHSGGALYTFRKVALFLIGNYEKLSPDLHEGMEHQRYVHPSTGGTYQKRVLEMKDSCQLTCFVIDYIFEKREQLRDTKEARYIVYLIQSLTGTQRLSVLRSTFPNFFQRLLMLKEIKFVRDLNVINFLPLMFLVHDNISYWHRQWSIPMVLFDDTIKLIPVEVGAYANRFGFKSFMNFTRFHPGELKKKQIAEDIHKEFGVVAFEYYTNTKISQGNVHTPVMTTKMDVLRVHLSSLCAGLADSVVYTLPVAHPKKCIVLIIVGDDKLEPHTRSEQIVSRYNYSRKHICGIVSVTIGQNSQLRVHTSGIVKHRVCDKFILKHKCKVILVRMPGYVFGNDELMTKLLNV</sequence>
<organism>
    <name type="scientific">Bluetongue virus 17 (isolate USA)</name>
    <name type="common">BTV 17</name>
    <dbReference type="NCBI Taxonomy" id="33718"/>
    <lineage>
        <taxon>Viruses</taxon>
        <taxon>Riboviria</taxon>
        <taxon>Orthornavirae</taxon>
        <taxon>Duplornaviricota</taxon>
        <taxon>Resentoviricetes</taxon>
        <taxon>Reovirales</taxon>
        <taxon>Sedoreoviridae</taxon>
        <taxon>Orbivirus</taxon>
        <taxon>Bluetongue virus</taxon>
    </lineage>
</organism>
<comment type="function">
    <text evidence="1">The VP2 protein is one of the two proteins (with VP5) which constitute the virus particle outer capsid. It is the major target of the host immunogenic response. Responsible for viral attachment to target host cell, probably by binding to sialic acid. This attachment induces virion internalization predominantly through clathrin-dependent endocytosis (By similarity).</text>
</comment>
<comment type="subcellular location">
    <subcellularLocation>
        <location evidence="2">Virion</location>
    </subcellularLocation>
</comment>
<comment type="similarity">
    <text evidence="2">Belongs to the orbivirus VP2 family.</text>
</comment>
<protein>
    <recommendedName>
        <fullName>Outer capsid protein VP2</fullName>
    </recommendedName>
</protein>
<reference key="1">
    <citation type="journal article" date="1987" name="Virology">
        <title>Identification and characterization of conserved and variable regions in the neutralization VP2 gene of bluetongue virus.</title>
        <authorList>
            <person name="Ghiasi H."/>
            <person name="Fukusho A."/>
            <person name="Eshita Y."/>
            <person name="Roy P."/>
        </authorList>
    </citation>
    <scope>NUCLEOTIDE SEQUENCE [GENOMIC RNA]</scope>
</reference>
<evidence type="ECO:0000250" key="1"/>
<evidence type="ECO:0000305" key="2"/>